<protein>
    <recommendedName>
        <fullName evidence="1">PAN2-PAN3 deadenylation complex subunit PAN3</fullName>
    </recommendedName>
    <alternativeName>
        <fullName evidence="1">PAB1P-dependent poly(A)-specific ribonuclease</fullName>
    </alternativeName>
    <alternativeName>
        <fullName evidence="1">Poly(A)-nuclease deadenylation complex subunit 3</fullName>
        <shortName evidence="1">PAN deadenylation complex subunit 3</shortName>
    </alternativeName>
</protein>
<accession>Q6FKP2</accession>
<evidence type="ECO:0000255" key="1">
    <source>
        <dbReference type="HAMAP-Rule" id="MF_03181"/>
    </source>
</evidence>
<evidence type="ECO:0000256" key="2">
    <source>
        <dbReference type="SAM" id="MobiDB-lite"/>
    </source>
</evidence>
<feature type="chain" id="PRO_0000295363" description="PAN2-PAN3 deadenylation complex subunit PAN3">
    <location>
        <begin position="1"/>
        <end position="717"/>
    </location>
</feature>
<feature type="zinc finger region" description="C3H1-type" evidence="1">
    <location>
        <begin position="8"/>
        <end position="37"/>
    </location>
</feature>
<feature type="region of interest" description="Disordered" evidence="2">
    <location>
        <begin position="37"/>
        <end position="100"/>
    </location>
</feature>
<feature type="region of interest" description="Pseudokinase domain" evidence="1">
    <location>
        <begin position="323"/>
        <end position="585"/>
    </location>
</feature>
<feature type="region of interest" description="Knob domain" evidence="1">
    <location>
        <begin position="625"/>
        <end position="717"/>
    </location>
</feature>
<feature type="coiled-coil region" evidence="1">
    <location>
        <begin position="586"/>
        <end position="624"/>
    </location>
</feature>
<feature type="compositionally biased region" description="Low complexity" evidence="2">
    <location>
        <begin position="62"/>
        <end position="90"/>
    </location>
</feature>
<feature type="compositionally biased region" description="Polar residues" evidence="2">
    <location>
        <begin position="91"/>
        <end position="100"/>
    </location>
</feature>
<feature type="binding site" evidence="1">
    <location>
        <position position="378"/>
    </location>
    <ligand>
        <name>ATP</name>
        <dbReference type="ChEBI" id="CHEBI:30616"/>
    </ligand>
</feature>
<feature type="binding site" evidence="1">
    <location>
        <begin position="428"/>
        <end position="435"/>
    </location>
    <ligand>
        <name>ATP</name>
        <dbReference type="ChEBI" id="CHEBI:30616"/>
    </ligand>
</feature>
<feature type="binding site" evidence="1">
    <location>
        <begin position="482"/>
        <end position="483"/>
    </location>
    <ligand>
        <name>ATP</name>
        <dbReference type="ChEBI" id="CHEBI:30616"/>
    </ligand>
</feature>
<dbReference type="EMBL" id="CR380958">
    <property type="protein sequence ID" value="CAG62172.1"/>
    <property type="molecule type" value="Genomic_DNA"/>
</dbReference>
<dbReference type="RefSeq" id="XP_449202.1">
    <property type="nucleotide sequence ID" value="XM_449202.1"/>
</dbReference>
<dbReference type="SMR" id="Q6FKP2"/>
<dbReference type="FunCoup" id="Q6FKP2">
    <property type="interactions" value="691"/>
</dbReference>
<dbReference type="STRING" id="284593.Q6FKP2"/>
<dbReference type="EnsemblFungi" id="CAGL0L09889g-T">
    <property type="protein sequence ID" value="CAGL0L09889g-T-p1"/>
    <property type="gene ID" value="CAGL0L09889g"/>
</dbReference>
<dbReference type="KEGG" id="cgr:2891085"/>
<dbReference type="CGD" id="CAL0135162">
    <property type="gene designation" value="CAGL0L09889g"/>
</dbReference>
<dbReference type="VEuPathDB" id="FungiDB:CAGL0L09889g"/>
<dbReference type="eggNOG" id="KOG3741">
    <property type="taxonomic scope" value="Eukaryota"/>
</dbReference>
<dbReference type="HOGENOM" id="CLU_016423_2_1_1"/>
<dbReference type="InParanoid" id="Q6FKP2"/>
<dbReference type="OMA" id="NIPCRNE"/>
<dbReference type="Proteomes" id="UP000002428">
    <property type="component" value="Chromosome L"/>
</dbReference>
<dbReference type="GO" id="GO:0000932">
    <property type="term" value="C:P-body"/>
    <property type="evidence" value="ECO:0007669"/>
    <property type="project" value="TreeGrafter"/>
</dbReference>
<dbReference type="GO" id="GO:0031251">
    <property type="term" value="C:PAN complex"/>
    <property type="evidence" value="ECO:0007669"/>
    <property type="project" value="UniProtKB-UniRule"/>
</dbReference>
<dbReference type="GO" id="GO:0005524">
    <property type="term" value="F:ATP binding"/>
    <property type="evidence" value="ECO:0007669"/>
    <property type="project" value="UniProtKB-UniRule"/>
</dbReference>
<dbReference type="GO" id="GO:0008143">
    <property type="term" value="F:poly(A) binding"/>
    <property type="evidence" value="ECO:0007669"/>
    <property type="project" value="EnsemblFungi"/>
</dbReference>
<dbReference type="GO" id="GO:0008270">
    <property type="term" value="F:zinc ion binding"/>
    <property type="evidence" value="ECO:0007669"/>
    <property type="project" value="UniProtKB-KW"/>
</dbReference>
<dbReference type="GO" id="GO:0006397">
    <property type="term" value="P:mRNA processing"/>
    <property type="evidence" value="ECO:0007669"/>
    <property type="project" value="UniProtKB-KW"/>
</dbReference>
<dbReference type="GO" id="GO:0000289">
    <property type="term" value="P:nuclear-transcribed mRNA poly(A) tail shortening"/>
    <property type="evidence" value="ECO:0007669"/>
    <property type="project" value="UniProtKB-UniRule"/>
</dbReference>
<dbReference type="GO" id="GO:0006301">
    <property type="term" value="P:postreplication repair"/>
    <property type="evidence" value="ECO:0007669"/>
    <property type="project" value="EnsemblFungi"/>
</dbReference>
<dbReference type="Gene3D" id="1.10.287.3700">
    <property type="match status" value="1"/>
</dbReference>
<dbReference type="Gene3D" id="1.20.5.5160">
    <property type="match status" value="1"/>
</dbReference>
<dbReference type="Gene3D" id="6.10.250.3160">
    <property type="match status" value="1"/>
</dbReference>
<dbReference type="Gene3D" id="1.10.510.10">
    <property type="entry name" value="Transferase(Phosphotransferase) domain 1"/>
    <property type="match status" value="1"/>
</dbReference>
<dbReference type="HAMAP" id="MF_03181">
    <property type="entry name" value="PAN3"/>
    <property type="match status" value="1"/>
</dbReference>
<dbReference type="InterPro" id="IPR011009">
    <property type="entry name" value="Kinase-like_dom_sf"/>
</dbReference>
<dbReference type="InterPro" id="IPR030844">
    <property type="entry name" value="PAN3"/>
</dbReference>
<dbReference type="InterPro" id="IPR041332">
    <property type="entry name" value="Pan3_PK"/>
</dbReference>
<dbReference type="InterPro" id="IPR000571">
    <property type="entry name" value="Znf_CCCH"/>
</dbReference>
<dbReference type="PANTHER" id="PTHR12272">
    <property type="entry name" value="DEADENYLATION COMPLEX SUBUNIT PAN3"/>
    <property type="match status" value="1"/>
</dbReference>
<dbReference type="PANTHER" id="PTHR12272:SF11">
    <property type="entry name" value="PAN2-PAN3 DEADENYLATION COMPLEX SUBUNIT PAN3"/>
    <property type="match status" value="1"/>
</dbReference>
<dbReference type="Pfam" id="PF18101">
    <property type="entry name" value="Pan3_PK"/>
    <property type="match status" value="1"/>
</dbReference>
<dbReference type="SUPFAM" id="SSF56112">
    <property type="entry name" value="Protein kinase-like (PK-like)"/>
    <property type="match status" value="1"/>
</dbReference>
<dbReference type="PROSITE" id="PS50103">
    <property type="entry name" value="ZF_C3H1"/>
    <property type="match status" value="1"/>
</dbReference>
<sequence length="717" mass="79802">MDKINPDWARDVPCRNVIIYGFCKKKTEGCPFKHDDDDIATPTSTPKVADTVPAPSGVIQQPSKISVSSLPSLNSQPSSTAPTSAPNATAHTGSKSQVPKFNAKASASFTPMSKAADGTQETQAPYLESPVAGSPGPILKAGTPVSFMQPNIYSTTPVPSPASMAMPNVVMPPNDMGSPDLGLQQQSHMVNLDGSIQQNYQERPNVLMRDSSMPLTMGTSGSRPMLDQQIHSISGLSNTSGPQPPGLLQSMNGASMDMGLPMNLRYPTIYPPTHSILQYHLYAPDPPPQLEIALKENERTPRMLFIPNDLREELVKRNLASLQLFPSGGNLPHIVKDYFGLVPLDFHQRSSVKDRYKKHKNSLYKVFSNVDGRIYLLRRIHDVNISDPTIISKTFQKWSKIDSSNVVALKDLFLTTAFGDSSLGIVYDYYPNATSLYEAHFVNYPTVEVTEDLLWSYAVQILNGLREIHNTNGVNIGDLDCDKIILTGKGRIKISAGAEYDIMNMCCPEDNEDDDNEEKLRKRNFVDLGEILFKLASKMCNCHGKDVANLAQVSEKLKNLIKSLAFEQLHDYVNVATIIEKYIGLDVVFKVMEAQQTYSEYAENVLSRELENGRLFRLICKLNFIFGRVENRLDINWSEPGDKFVIVLFYDYVFHQIDPNTGKPVTDLTHVLRCLNKLDAGVEENILLVTPDELNTAVVSYKKVKELVDKTFRAMTL</sequence>
<comment type="function">
    <text evidence="1">Regulatory subunit of the poly(A)-nuclease (PAN) deadenylation complex, one of two cytoplasmic mRNA deadenylases involved in mRNA turnover. PAN specifically shortens poly(A) tails of RNA and the activity is stimulated by poly(A)-binding protein PAB1. PAN deadenylation is followed by rapid degradation of the shortened mRNA tails by the CCR4-NOT complex. Deadenylated mRNAs are then degraded by two alternative mechanisms, namely exosome-mediated 3'-5' exonucleolytic degradation, or deadenylation-dependent mRNA decaping and subsequent 5'-3' exonucleolytic degradation by XRN1. May also be involved in post-transcriptional maturation of mRNA poly(A) tails. PAN3 acts as a positive regulator for PAN activity, recruiting the catalytic subunit PAN2 to mRNA via its interaction with RNA and with PAB1.</text>
</comment>
<comment type="subunit">
    <text evidence="1">Homodimer. Forms a heterotrimer with a catalytic subunit PAN2 to form the poly(A)-nuclease (PAN) deadenylation complex. Interacts (via PAM-2 motif) with poly(A)-binding protein PAB1 (via PABC domain), conferring substrate specificity of the enzyme complex.</text>
</comment>
<comment type="subcellular location">
    <subcellularLocation>
        <location evidence="1">Cytoplasm</location>
    </subcellularLocation>
</comment>
<comment type="domain">
    <text evidence="1">The N-terminal zinc finger binds to poly(A) RNA.</text>
</comment>
<comment type="domain">
    <text evidence="1">Contains a pseudokinase domain. The protein kinase domain is predicted to be catalytically inactive because some of the residues important for catalytic activity are substituted and it lacks the equivalent of the binding site for a peptide substrate. However, it has retained an ATP-binding site and ATP-binding is required for mRNA degradation, stimulating the activity of the PAN2 nuclease in vitro. The nucleotide-binding site is juxtaposed to the RNase active site of PAN2 in the complex and may actually bind nucleosides of a poly(A) RNA rather than ATP, feeding the poly(A)-tail to the active site of the deadenylase and thus increasing the efficiency with which this distributive enzyme degrades oligo(A) RNAs.</text>
</comment>
<comment type="domain">
    <text evidence="1">The pseudokinase domain, the coiled-coil (CC), and C-terminal knob domain (CK) form a structural unit (PKC) that forms an extensive high-affinity interaction surface for PAN2.</text>
</comment>
<comment type="similarity">
    <text evidence="1">Belongs to the protein kinase superfamily. PAN3 family.</text>
</comment>
<keyword id="KW-0067">ATP-binding</keyword>
<keyword id="KW-0175">Coiled coil</keyword>
<keyword id="KW-0963">Cytoplasm</keyword>
<keyword id="KW-0479">Metal-binding</keyword>
<keyword id="KW-0507">mRNA processing</keyword>
<keyword id="KW-0547">Nucleotide-binding</keyword>
<keyword id="KW-1185">Reference proteome</keyword>
<keyword id="KW-0862">Zinc</keyword>
<keyword id="KW-0863">Zinc-finger</keyword>
<name>PAN3_CANGA</name>
<proteinExistence type="inferred from homology"/>
<reference key="1">
    <citation type="journal article" date="2004" name="Nature">
        <title>Genome evolution in yeasts.</title>
        <authorList>
            <person name="Dujon B."/>
            <person name="Sherman D."/>
            <person name="Fischer G."/>
            <person name="Durrens P."/>
            <person name="Casaregola S."/>
            <person name="Lafontaine I."/>
            <person name="de Montigny J."/>
            <person name="Marck C."/>
            <person name="Neuveglise C."/>
            <person name="Talla E."/>
            <person name="Goffard N."/>
            <person name="Frangeul L."/>
            <person name="Aigle M."/>
            <person name="Anthouard V."/>
            <person name="Babour A."/>
            <person name="Barbe V."/>
            <person name="Barnay S."/>
            <person name="Blanchin S."/>
            <person name="Beckerich J.-M."/>
            <person name="Beyne E."/>
            <person name="Bleykasten C."/>
            <person name="Boisrame A."/>
            <person name="Boyer J."/>
            <person name="Cattolico L."/>
            <person name="Confanioleri F."/>
            <person name="de Daruvar A."/>
            <person name="Despons L."/>
            <person name="Fabre E."/>
            <person name="Fairhead C."/>
            <person name="Ferry-Dumazet H."/>
            <person name="Groppi A."/>
            <person name="Hantraye F."/>
            <person name="Hennequin C."/>
            <person name="Jauniaux N."/>
            <person name="Joyet P."/>
            <person name="Kachouri R."/>
            <person name="Kerrest A."/>
            <person name="Koszul R."/>
            <person name="Lemaire M."/>
            <person name="Lesur I."/>
            <person name="Ma L."/>
            <person name="Muller H."/>
            <person name="Nicaud J.-M."/>
            <person name="Nikolski M."/>
            <person name="Oztas S."/>
            <person name="Ozier-Kalogeropoulos O."/>
            <person name="Pellenz S."/>
            <person name="Potier S."/>
            <person name="Richard G.-F."/>
            <person name="Straub M.-L."/>
            <person name="Suleau A."/>
            <person name="Swennen D."/>
            <person name="Tekaia F."/>
            <person name="Wesolowski-Louvel M."/>
            <person name="Westhof E."/>
            <person name="Wirth B."/>
            <person name="Zeniou-Meyer M."/>
            <person name="Zivanovic Y."/>
            <person name="Bolotin-Fukuhara M."/>
            <person name="Thierry A."/>
            <person name="Bouchier C."/>
            <person name="Caudron B."/>
            <person name="Scarpelli C."/>
            <person name="Gaillardin C."/>
            <person name="Weissenbach J."/>
            <person name="Wincker P."/>
            <person name="Souciet J.-L."/>
        </authorList>
    </citation>
    <scope>NUCLEOTIDE SEQUENCE [LARGE SCALE GENOMIC DNA]</scope>
    <source>
        <strain>ATCC 2001 / BCRC 20586 / JCM 3761 / NBRC 0622 / NRRL Y-65 / CBS 138</strain>
    </source>
</reference>
<gene>
    <name evidence="1" type="primary">PAN3</name>
    <name type="ordered locus">CAGL0L09889g</name>
</gene>
<organism>
    <name type="scientific">Candida glabrata (strain ATCC 2001 / BCRC 20586 / JCM 3761 / NBRC 0622 / NRRL Y-65 / CBS 138)</name>
    <name type="common">Yeast</name>
    <name type="synonym">Nakaseomyces glabratus</name>
    <dbReference type="NCBI Taxonomy" id="284593"/>
    <lineage>
        <taxon>Eukaryota</taxon>
        <taxon>Fungi</taxon>
        <taxon>Dikarya</taxon>
        <taxon>Ascomycota</taxon>
        <taxon>Saccharomycotina</taxon>
        <taxon>Saccharomycetes</taxon>
        <taxon>Saccharomycetales</taxon>
        <taxon>Saccharomycetaceae</taxon>
        <taxon>Nakaseomyces</taxon>
    </lineage>
</organism>